<comment type="function">
    <text evidence="1">Phosphorolytic 3'-5' exoribonuclease that plays an important role in tRNA 3'-end maturation. Removes nucleotide residues following the 3'-CCA terminus of tRNAs; can also add nucleotides to the ends of RNA molecules by using nucleoside diphosphates as substrates, but this may not be physiologically important. Probably plays a role in initiation of 16S rRNA degradation (leading to ribosome degradation) during starvation.</text>
</comment>
<comment type="catalytic activity">
    <reaction evidence="1">
        <text>tRNA(n+1) + phosphate = tRNA(n) + a ribonucleoside 5'-diphosphate</text>
        <dbReference type="Rhea" id="RHEA:10628"/>
        <dbReference type="Rhea" id="RHEA-COMP:17343"/>
        <dbReference type="Rhea" id="RHEA-COMP:17344"/>
        <dbReference type="ChEBI" id="CHEBI:43474"/>
        <dbReference type="ChEBI" id="CHEBI:57930"/>
        <dbReference type="ChEBI" id="CHEBI:173114"/>
        <dbReference type="EC" id="2.7.7.56"/>
    </reaction>
</comment>
<comment type="subunit">
    <text evidence="1">Homohexameric ring arranged as a trimer of dimers.</text>
</comment>
<comment type="similarity">
    <text evidence="1">Belongs to the RNase PH family.</text>
</comment>
<evidence type="ECO:0000255" key="1">
    <source>
        <dbReference type="HAMAP-Rule" id="MF_00564"/>
    </source>
</evidence>
<organism>
    <name type="scientific">Coxiella burnetii (strain Dugway 5J108-111)</name>
    <dbReference type="NCBI Taxonomy" id="434922"/>
    <lineage>
        <taxon>Bacteria</taxon>
        <taxon>Pseudomonadati</taxon>
        <taxon>Pseudomonadota</taxon>
        <taxon>Gammaproteobacteria</taxon>
        <taxon>Legionellales</taxon>
        <taxon>Coxiellaceae</taxon>
        <taxon>Coxiella</taxon>
    </lineage>
</organism>
<reference key="1">
    <citation type="journal article" date="2009" name="Infect. Immun.">
        <title>Comparative genomics reveal extensive transposon-mediated genomic plasticity and diversity among potential effector proteins within the genus Coxiella.</title>
        <authorList>
            <person name="Beare P.A."/>
            <person name="Unsworth N."/>
            <person name="Andoh M."/>
            <person name="Voth D.E."/>
            <person name="Omsland A."/>
            <person name="Gilk S.D."/>
            <person name="Williams K.P."/>
            <person name="Sobral B.W."/>
            <person name="Kupko J.J. III"/>
            <person name="Porcella S.F."/>
            <person name="Samuel J.E."/>
            <person name="Heinzen R.A."/>
        </authorList>
    </citation>
    <scope>NUCLEOTIDE SEQUENCE [LARGE SCALE GENOMIC DNA]</scope>
    <source>
        <strain>Dugway 5J108-111</strain>
    </source>
</reference>
<gene>
    <name evidence="1" type="primary">rph</name>
    <name type="ordered locus">CBUD_1782</name>
</gene>
<sequence>MIMRPSKRAANELRPLSFTTQFTRYAEGSVLVTLGNTKVICNASIVEGVPRFLKNSEQGWLTAEYGMLPRSTHSRMDREASRGKQGGRTVEIQRLIGRSLRAALDLKLLGPYTITIDCDVIQADGGTRTAAINGSCIAMIEALRHLQRKGILQTDPLKHKVAAVSVGIYKGVPVLDLDYAEDSNAHTDMNVVMTDNDAFIEIQGTAEGDAFHAKELDALINLARHGIKQIIEKQQEALS</sequence>
<protein>
    <recommendedName>
        <fullName evidence="1">Ribonuclease PH</fullName>
        <shortName evidence="1">RNase PH</shortName>
        <ecNumber evidence="1">2.7.7.56</ecNumber>
    </recommendedName>
    <alternativeName>
        <fullName evidence="1">tRNA nucleotidyltransferase</fullName>
    </alternativeName>
</protein>
<accession>A9KGR9</accession>
<feature type="chain" id="PRO_1000082287" description="Ribonuclease PH">
    <location>
        <begin position="1"/>
        <end position="239"/>
    </location>
</feature>
<feature type="binding site" evidence="1">
    <location>
        <position position="88"/>
    </location>
    <ligand>
        <name>phosphate</name>
        <dbReference type="ChEBI" id="CHEBI:43474"/>
        <note>substrate</note>
    </ligand>
</feature>
<feature type="binding site" evidence="1">
    <location>
        <begin position="126"/>
        <end position="128"/>
    </location>
    <ligand>
        <name>phosphate</name>
        <dbReference type="ChEBI" id="CHEBI:43474"/>
        <note>substrate</note>
    </ligand>
</feature>
<dbReference type="EC" id="2.7.7.56" evidence="1"/>
<dbReference type="EMBL" id="CP000733">
    <property type="protein sequence ID" value="ABS77511.2"/>
    <property type="molecule type" value="Genomic_DNA"/>
</dbReference>
<dbReference type="SMR" id="A9KGR9"/>
<dbReference type="KEGG" id="cbd:CBUD_1782"/>
<dbReference type="HOGENOM" id="CLU_050858_0_0_6"/>
<dbReference type="Proteomes" id="UP000008555">
    <property type="component" value="Chromosome"/>
</dbReference>
<dbReference type="GO" id="GO:0000175">
    <property type="term" value="F:3'-5'-RNA exonuclease activity"/>
    <property type="evidence" value="ECO:0007669"/>
    <property type="project" value="UniProtKB-UniRule"/>
</dbReference>
<dbReference type="GO" id="GO:0000049">
    <property type="term" value="F:tRNA binding"/>
    <property type="evidence" value="ECO:0007669"/>
    <property type="project" value="UniProtKB-UniRule"/>
</dbReference>
<dbReference type="GO" id="GO:0009022">
    <property type="term" value="F:tRNA nucleotidyltransferase activity"/>
    <property type="evidence" value="ECO:0007669"/>
    <property type="project" value="UniProtKB-UniRule"/>
</dbReference>
<dbReference type="GO" id="GO:0016075">
    <property type="term" value="P:rRNA catabolic process"/>
    <property type="evidence" value="ECO:0007669"/>
    <property type="project" value="UniProtKB-UniRule"/>
</dbReference>
<dbReference type="GO" id="GO:0006364">
    <property type="term" value="P:rRNA processing"/>
    <property type="evidence" value="ECO:0007669"/>
    <property type="project" value="UniProtKB-KW"/>
</dbReference>
<dbReference type="GO" id="GO:0008033">
    <property type="term" value="P:tRNA processing"/>
    <property type="evidence" value="ECO:0007669"/>
    <property type="project" value="UniProtKB-UniRule"/>
</dbReference>
<dbReference type="CDD" id="cd11362">
    <property type="entry name" value="RNase_PH_bact"/>
    <property type="match status" value="1"/>
</dbReference>
<dbReference type="FunFam" id="3.30.230.70:FF:000003">
    <property type="entry name" value="Ribonuclease PH"/>
    <property type="match status" value="1"/>
</dbReference>
<dbReference type="Gene3D" id="3.30.230.70">
    <property type="entry name" value="GHMP Kinase, N-terminal domain"/>
    <property type="match status" value="1"/>
</dbReference>
<dbReference type="HAMAP" id="MF_00564">
    <property type="entry name" value="RNase_PH"/>
    <property type="match status" value="1"/>
</dbReference>
<dbReference type="InterPro" id="IPR001247">
    <property type="entry name" value="ExoRNase_PH_dom1"/>
</dbReference>
<dbReference type="InterPro" id="IPR015847">
    <property type="entry name" value="ExoRNase_PH_dom2"/>
</dbReference>
<dbReference type="InterPro" id="IPR036345">
    <property type="entry name" value="ExoRNase_PH_dom2_sf"/>
</dbReference>
<dbReference type="InterPro" id="IPR027408">
    <property type="entry name" value="PNPase/RNase_PH_dom_sf"/>
</dbReference>
<dbReference type="InterPro" id="IPR020568">
    <property type="entry name" value="Ribosomal_Su5_D2-typ_SF"/>
</dbReference>
<dbReference type="InterPro" id="IPR050080">
    <property type="entry name" value="RNase_PH"/>
</dbReference>
<dbReference type="InterPro" id="IPR002381">
    <property type="entry name" value="RNase_PH_bac-type"/>
</dbReference>
<dbReference type="InterPro" id="IPR018336">
    <property type="entry name" value="RNase_PH_CS"/>
</dbReference>
<dbReference type="NCBIfam" id="TIGR01966">
    <property type="entry name" value="RNasePH"/>
    <property type="match status" value="1"/>
</dbReference>
<dbReference type="PANTHER" id="PTHR11953">
    <property type="entry name" value="EXOSOME COMPLEX COMPONENT"/>
    <property type="match status" value="1"/>
</dbReference>
<dbReference type="PANTHER" id="PTHR11953:SF0">
    <property type="entry name" value="EXOSOME COMPLEX COMPONENT RRP41"/>
    <property type="match status" value="1"/>
</dbReference>
<dbReference type="Pfam" id="PF01138">
    <property type="entry name" value="RNase_PH"/>
    <property type="match status" value="1"/>
</dbReference>
<dbReference type="Pfam" id="PF03725">
    <property type="entry name" value="RNase_PH_C"/>
    <property type="match status" value="1"/>
</dbReference>
<dbReference type="SUPFAM" id="SSF55666">
    <property type="entry name" value="Ribonuclease PH domain 2-like"/>
    <property type="match status" value="1"/>
</dbReference>
<dbReference type="SUPFAM" id="SSF54211">
    <property type="entry name" value="Ribosomal protein S5 domain 2-like"/>
    <property type="match status" value="1"/>
</dbReference>
<dbReference type="PROSITE" id="PS01277">
    <property type="entry name" value="RIBONUCLEASE_PH"/>
    <property type="match status" value="1"/>
</dbReference>
<proteinExistence type="inferred from homology"/>
<keyword id="KW-0548">Nucleotidyltransferase</keyword>
<keyword id="KW-0694">RNA-binding</keyword>
<keyword id="KW-0698">rRNA processing</keyword>
<keyword id="KW-0808">Transferase</keyword>
<keyword id="KW-0819">tRNA processing</keyword>
<keyword id="KW-0820">tRNA-binding</keyword>
<name>RNPH_COXBN</name>